<protein>
    <recommendedName>
        <fullName evidence="1">Cell division protein FtsZ</fullName>
    </recommendedName>
</protein>
<organism>
    <name type="scientific">Corynebacterium glutamicum (strain ATCC 13032 / DSM 20300 / JCM 1318 / BCRC 11384 / CCUG 27702 / LMG 3730 / NBRC 12168 / NCIMB 10025 / NRRL B-2784 / 534)</name>
    <dbReference type="NCBI Taxonomy" id="196627"/>
    <lineage>
        <taxon>Bacteria</taxon>
        <taxon>Bacillati</taxon>
        <taxon>Actinomycetota</taxon>
        <taxon>Actinomycetes</taxon>
        <taxon>Mycobacteriales</taxon>
        <taxon>Corynebacteriaceae</taxon>
        <taxon>Corynebacterium</taxon>
    </lineage>
</organism>
<keyword id="KW-0002">3D-structure</keyword>
<keyword id="KW-0131">Cell cycle</keyword>
<keyword id="KW-0132">Cell division</keyword>
<keyword id="KW-0963">Cytoplasm</keyword>
<keyword id="KW-0342">GTP-binding</keyword>
<keyword id="KW-0547">Nucleotide-binding</keyword>
<keyword id="KW-1185">Reference proteome</keyword>
<keyword id="KW-0717">Septation</keyword>
<comment type="function">
    <text evidence="1">Essential cell division protein that forms a contractile ring structure (Z ring) at the future cell division site. The regulation of the ring assembly controls the timing and the location of cell division. One of the functions of the FtsZ ring is to recruit other cell division proteins to the septum to produce a new cell wall between the dividing cells. Binds GTP and shows GTPase activity.</text>
</comment>
<comment type="subunit">
    <text evidence="1">Homodimer. Polymerizes to form a dynamic ring structure in a strictly GTP-dependent manner. Interacts directly with several other division proteins.</text>
</comment>
<comment type="subcellular location">
    <subcellularLocation>
        <location evidence="1">Cytoplasm</location>
    </subcellularLocation>
    <text evidence="1">Assembles at midcell at the inner surface of the cytoplasmic membrane.</text>
</comment>
<comment type="similarity">
    <text evidence="1">Belongs to the FtsZ family.</text>
</comment>
<feature type="chain" id="PRO_0000114348" description="Cell division protein FtsZ">
    <location>
        <begin position="1"/>
        <end position="442"/>
    </location>
</feature>
<feature type="region of interest" description="Disordered" evidence="2">
    <location>
        <begin position="329"/>
        <end position="442"/>
    </location>
</feature>
<feature type="compositionally biased region" description="Low complexity" evidence="2">
    <location>
        <begin position="329"/>
        <end position="341"/>
    </location>
</feature>
<feature type="compositionally biased region" description="Basic and acidic residues" evidence="2">
    <location>
        <begin position="349"/>
        <end position="362"/>
    </location>
</feature>
<feature type="compositionally biased region" description="Basic and acidic residues" evidence="2">
    <location>
        <begin position="390"/>
        <end position="431"/>
    </location>
</feature>
<feature type="binding site" evidence="1">
    <location>
        <begin position="18"/>
        <end position="22"/>
    </location>
    <ligand>
        <name>GTP</name>
        <dbReference type="ChEBI" id="CHEBI:37565"/>
    </ligand>
</feature>
<feature type="binding site" evidence="1">
    <location>
        <begin position="105"/>
        <end position="107"/>
    </location>
    <ligand>
        <name>GTP</name>
        <dbReference type="ChEBI" id="CHEBI:37565"/>
    </ligand>
</feature>
<feature type="binding site" evidence="1">
    <location>
        <position position="136"/>
    </location>
    <ligand>
        <name>GTP</name>
        <dbReference type="ChEBI" id="CHEBI:37565"/>
    </ligand>
</feature>
<feature type="binding site" evidence="1">
    <location>
        <position position="140"/>
    </location>
    <ligand>
        <name>GTP</name>
        <dbReference type="ChEBI" id="CHEBI:37565"/>
    </ligand>
</feature>
<feature type="binding site" evidence="1">
    <location>
        <position position="184"/>
    </location>
    <ligand>
        <name>GTP</name>
        <dbReference type="ChEBI" id="CHEBI:37565"/>
    </ligand>
</feature>
<feature type="sequence conflict" description="In Ref. 1; BAA21687." evidence="3" ref="1">
    <original>V</original>
    <variation>D</variation>
    <location>
        <position position="21"/>
    </location>
</feature>
<feature type="sequence conflict" description="In Ref. 1; BAA21687." evidence="3" ref="1">
    <original>D</original>
    <variation>Y</variation>
    <location>
        <position position="81"/>
    </location>
</feature>
<feature type="sequence conflict" description="In Ref. 1; BAA21687." evidence="3" ref="1">
    <original>T</original>
    <variation>A</variation>
    <location>
        <position position="106"/>
    </location>
</feature>
<feature type="sequence conflict" description="In Ref. 1; BAA21687." evidence="3" ref="1">
    <original>AG</original>
    <variation>GR</variation>
    <location>
        <begin position="115"/>
        <end position="116"/>
    </location>
</feature>
<feature type="sequence conflict" description="In Ref. 2; CAA70158." evidence="3" ref="2">
    <original>A</original>
    <variation>R</variation>
    <location>
        <position position="179"/>
    </location>
</feature>
<feature type="sequence conflict" description="In Ref. 1; BAA21687." evidence="3" ref="1">
    <original>GV</original>
    <variation>C</variation>
    <location>
        <begin position="202"/>
        <end position="203"/>
    </location>
</feature>
<feature type="sequence conflict" description="In Ref. 1 and 2." evidence="3" ref="1 2">
    <original>S</original>
    <variation>P</variation>
    <location>
        <position position="328"/>
    </location>
</feature>
<feature type="sequence conflict" description="In Ref. 1; BAA21687." evidence="3" ref="1">
    <original>Q</original>
    <variation>QQ</variation>
    <location>
        <position position="339"/>
    </location>
</feature>
<feature type="sequence conflict" description="In Ref. 1 and 2." evidence="3" ref="1 2">
    <location>
        <begin position="410"/>
        <end position="413"/>
    </location>
</feature>
<feature type="helix" evidence="4">
    <location>
        <begin position="439"/>
        <end position="441"/>
    </location>
</feature>
<proteinExistence type="evidence at protein level"/>
<gene>
    <name evidence="1" type="primary">ftsZ</name>
    <name type="ordered locus">Cgl2155</name>
    <name type="ordered locus">cg2366</name>
</gene>
<sequence>MTSPNNYLAKIKVVGVGGGGVNAVNRMIEEGLKGVEFIAVNTDSQALMFSDADVKLDIGREATRGLGAGANPEVGRASAEDHKNEIEETIKGADMVFVTAGEGGGTGTGAAPVVAGIAKKMGALTIGVVTKPFEFEGRRRTRQAEEGIAALKEVCDTLIVIPNDRLLELGDANLSIMEAFRAADEVLHNGVQGITNLITIPGVINVDFADVRSVMSEAGSALMGVGSARGDNRVVSATEQAINSPLLEATMDGATGVLLSFAGGSDLGLMEVNAAASMVRERSDEDVNLIFGTIIDDNLGDEVRVTVIATGFDAARASAAENRRAGISAAPAAEPVQQQVPTTNATLPPEKESIFGGAREENDPYLSRSAGARHRIEETRSGGGLFTTGNDRDYRRDERREDHRDERRDERRDDRSYDRRDDRRDDRRDDRGDDLDVPSFLQ</sequence>
<evidence type="ECO:0000255" key="1">
    <source>
        <dbReference type="HAMAP-Rule" id="MF_00909"/>
    </source>
</evidence>
<evidence type="ECO:0000256" key="2">
    <source>
        <dbReference type="SAM" id="MobiDB-lite"/>
    </source>
</evidence>
<evidence type="ECO:0000305" key="3"/>
<evidence type="ECO:0007829" key="4">
    <source>
        <dbReference type="PDB" id="6SAT"/>
    </source>
</evidence>
<reference key="1">
    <citation type="journal article" date="1997" name="Biochem. Biophys. Res. Commun.">
        <title>Cloning, sequencing, and characterization of the ftsZ gene from coryneform bacteria.</title>
        <authorList>
            <person name="Kobayashi M."/>
            <person name="Asai Y."/>
            <person name="Hatakeyama K."/>
            <person name="Kijima N."/>
            <person name="Wachi M."/>
            <person name="Nagai K."/>
            <person name="Yukawa H."/>
        </authorList>
    </citation>
    <scope>NUCLEOTIDE SEQUENCE [GENOMIC DNA]</scope>
</reference>
<reference key="2">
    <citation type="journal article" date="1998" name="Mol. Gen. Genet.">
        <title>Identification, characterization, and chromosomal organization of the ftsZ gene from Brevibacterium lactofermentum.</title>
        <authorList>
            <person name="Honrubia M.P."/>
            <person name="Fernandez F.J."/>
            <person name="Gil J.A."/>
        </authorList>
    </citation>
    <scope>NUCLEOTIDE SEQUENCE [GENOMIC DNA]</scope>
    <source>
        <strain>ATCC 13869 / DSMZ 1412 / NCIMB 9567</strain>
    </source>
</reference>
<reference key="3">
    <citation type="journal article" date="2003" name="Appl. Microbiol. Biotechnol.">
        <title>The Corynebacterium glutamicum genome: features and impacts on biotechnological processes.</title>
        <authorList>
            <person name="Ikeda M."/>
            <person name="Nakagawa S."/>
        </authorList>
    </citation>
    <scope>NUCLEOTIDE SEQUENCE [LARGE SCALE GENOMIC DNA]</scope>
    <source>
        <strain>ATCC 13032 / DSM 20300 / JCM 1318 / BCRC 11384 / CCUG 27702 / LMG 3730 / NBRC 12168 / NCIMB 10025 / NRRL B-2784 / 534</strain>
    </source>
</reference>
<reference key="4">
    <citation type="journal article" date="2003" name="J. Biotechnol.">
        <title>The complete Corynebacterium glutamicum ATCC 13032 genome sequence and its impact on the production of L-aspartate-derived amino acids and vitamins.</title>
        <authorList>
            <person name="Kalinowski J."/>
            <person name="Bathe B."/>
            <person name="Bartels D."/>
            <person name="Bischoff N."/>
            <person name="Bott M."/>
            <person name="Burkovski A."/>
            <person name="Dusch N."/>
            <person name="Eggeling L."/>
            <person name="Eikmanns B.J."/>
            <person name="Gaigalat L."/>
            <person name="Goesmann A."/>
            <person name="Hartmann M."/>
            <person name="Huthmacher K."/>
            <person name="Kraemer R."/>
            <person name="Linke B."/>
            <person name="McHardy A.C."/>
            <person name="Meyer F."/>
            <person name="Moeckel B."/>
            <person name="Pfefferle W."/>
            <person name="Puehler A."/>
            <person name="Rey D.A."/>
            <person name="Rueckert C."/>
            <person name="Rupp O."/>
            <person name="Sahm H."/>
            <person name="Wendisch V.F."/>
            <person name="Wiegraebe I."/>
            <person name="Tauch A."/>
        </authorList>
    </citation>
    <scope>NUCLEOTIDE SEQUENCE [LARGE SCALE GENOMIC DNA]</scope>
    <source>
        <strain>ATCC 13032 / DSM 20300 / JCM 1318 / BCRC 11384 / CCUG 27702 / LMG 3730 / NBRC 12168 / NCIMB 10025 / NRRL B-2784 / 534</strain>
    </source>
</reference>
<name>FTSZ_CORGL</name>
<accession>P94337</accession>
<accession>O24746</accession>
<dbReference type="EMBL" id="AB003132">
    <property type="protein sequence ID" value="BAA21687.1"/>
    <property type="molecule type" value="Genomic_DNA"/>
</dbReference>
<dbReference type="EMBL" id="Y08964">
    <property type="protein sequence ID" value="CAA70158.1"/>
    <property type="molecule type" value="Genomic_DNA"/>
</dbReference>
<dbReference type="EMBL" id="BA000036">
    <property type="protein sequence ID" value="BAB99548.1"/>
    <property type="molecule type" value="Genomic_DNA"/>
</dbReference>
<dbReference type="EMBL" id="BX927154">
    <property type="protein sequence ID" value="CAF20495.1"/>
    <property type="molecule type" value="Genomic_DNA"/>
</dbReference>
<dbReference type="PIR" id="JC5548">
    <property type="entry name" value="JC5548"/>
</dbReference>
<dbReference type="RefSeq" id="NP_601357.1">
    <property type="nucleotide sequence ID" value="NC_003450.3"/>
</dbReference>
<dbReference type="RefSeq" id="WP_011014920.1">
    <property type="nucleotide sequence ID" value="NC_006958.1"/>
</dbReference>
<dbReference type="PDB" id="6SAT">
    <property type="method" value="X-ray"/>
    <property type="resolution" value="1.60 A"/>
    <property type="chains" value="P/Q=433-442"/>
</dbReference>
<dbReference type="PDB" id="6SCS">
    <property type="method" value="X-ray"/>
    <property type="resolution" value="2.20 A"/>
    <property type="chains" value="P/Q/R/S=433-442"/>
</dbReference>
<dbReference type="PDB" id="8BVF">
    <property type="method" value="X-ray"/>
    <property type="resolution" value="2.68 A"/>
    <property type="chains" value="C/D=433-442"/>
</dbReference>
<dbReference type="PDBsum" id="6SAT"/>
<dbReference type="PDBsum" id="6SCS"/>
<dbReference type="PDBsum" id="8BVF"/>
<dbReference type="SMR" id="P94337"/>
<dbReference type="STRING" id="196627.cg2366"/>
<dbReference type="GeneID" id="1020107"/>
<dbReference type="KEGG" id="cgb:cg2366"/>
<dbReference type="KEGG" id="cgl:Cgl2155"/>
<dbReference type="PATRIC" id="fig|196627.13.peg.2093"/>
<dbReference type="eggNOG" id="COG0206">
    <property type="taxonomic scope" value="Bacteria"/>
</dbReference>
<dbReference type="HOGENOM" id="CLU_024865_2_3_11"/>
<dbReference type="OrthoDB" id="9813375at2"/>
<dbReference type="BioCyc" id="CORYNE:G18NG-11747-MONOMER"/>
<dbReference type="Proteomes" id="UP000000582">
    <property type="component" value="Chromosome"/>
</dbReference>
<dbReference type="Proteomes" id="UP000001009">
    <property type="component" value="Chromosome"/>
</dbReference>
<dbReference type="GO" id="GO:0032153">
    <property type="term" value="C:cell division site"/>
    <property type="evidence" value="ECO:0007669"/>
    <property type="project" value="UniProtKB-UniRule"/>
</dbReference>
<dbReference type="GO" id="GO:0005737">
    <property type="term" value="C:cytoplasm"/>
    <property type="evidence" value="ECO:0007669"/>
    <property type="project" value="UniProtKB-SubCell"/>
</dbReference>
<dbReference type="GO" id="GO:0005525">
    <property type="term" value="F:GTP binding"/>
    <property type="evidence" value="ECO:0007669"/>
    <property type="project" value="UniProtKB-UniRule"/>
</dbReference>
<dbReference type="GO" id="GO:0003924">
    <property type="term" value="F:GTPase activity"/>
    <property type="evidence" value="ECO:0007669"/>
    <property type="project" value="UniProtKB-UniRule"/>
</dbReference>
<dbReference type="GO" id="GO:0000917">
    <property type="term" value="P:division septum assembly"/>
    <property type="evidence" value="ECO:0007669"/>
    <property type="project" value="UniProtKB-KW"/>
</dbReference>
<dbReference type="GO" id="GO:0043093">
    <property type="term" value="P:FtsZ-dependent cytokinesis"/>
    <property type="evidence" value="ECO:0007669"/>
    <property type="project" value="UniProtKB-UniRule"/>
</dbReference>
<dbReference type="GO" id="GO:0051258">
    <property type="term" value="P:protein polymerization"/>
    <property type="evidence" value="ECO:0007669"/>
    <property type="project" value="UniProtKB-UniRule"/>
</dbReference>
<dbReference type="CDD" id="cd02201">
    <property type="entry name" value="FtsZ_type1"/>
    <property type="match status" value="1"/>
</dbReference>
<dbReference type="FunFam" id="3.40.50.1440:FF:000023">
    <property type="entry name" value="Cell division protein FtsZ"/>
    <property type="match status" value="1"/>
</dbReference>
<dbReference type="Gene3D" id="3.30.1330.20">
    <property type="entry name" value="Tubulin/FtsZ, C-terminal domain"/>
    <property type="match status" value="1"/>
</dbReference>
<dbReference type="Gene3D" id="3.40.50.1440">
    <property type="entry name" value="Tubulin/FtsZ, GTPase domain"/>
    <property type="match status" value="1"/>
</dbReference>
<dbReference type="HAMAP" id="MF_00909">
    <property type="entry name" value="FtsZ"/>
    <property type="match status" value="1"/>
</dbReference>
<dbReference type="InterPro" id="IPR000158">
    <property type="entry name" value="Cell_div_FtsZ"/>
</dbReference>
<dbReference type="InterPro" id="IPR020805">
    <property type="entry name" value="Cell_div_FtsZ_CS"/>
</dbReference>
<dbReference type="InterPro" id="IPR045061">
    <property type="entry name" value="FtsZ/CetZ"/>
</dbReference>
<dbReference type="InterPro" id="IPR024757">
    <property type="entry name" value="FtsZ_C"/>
</dbReference>
<dbReference type="InterPro" id="IPR008280">
    <property type="entry name" value="Tub_FtsZ_C"/>
</dbReference>
<dbReference type="InterPro" id="IPR037103">
    <property type="entry name" value="Tubulin/FtsZ-like_C"/>
</dbReference>
<dbReference type="InterPro" id="IPR018316">
    <property type="entry name" value="Tubulin/FtsZ_2-layer-sand-dom"/>
</dbReference>
<dbReference type="InterPro" id="IPR036525">
    <property type="entry name" value="Tubulin/FtsZ_GTPase_sf"/>
</dbReference>
<dbReference type="InterPro" id="IPR003008">
    <property type="entry name" value="Tubulin_FtsZ_GTPase"/>
</dbReference>
<dbReference type="NCBIfam" id="TIGR00065">
    <property type="entry name" value="ftsZ"/>
    <property type="match status" value="1"/>
</dbReference>
<dbReference type="PANTHER" id="PTHR30314">
    <property type="entry name" value="CELL DIVISION PROTEIN FTSZ-RELATED"/>
    <property type="match status" value="1"/>
</dbReference>
<dbReference type="PANTHER" id="PTHR30314:SF3">
    <property type="entry name" value="MITOCHONDRIAL DIVISION PROTEIN FSZA"/>
    <property type="match status" value="1"/>
</dbReference>
<dbReference type="Pfam" id="PF12327">
    <property type="entry name" value="FtsZ_C"/>
    <property type="match status" value="1"/>
</dbReference>
<dbReference type="Pfam" id="PF00091">
    <property type="entry name" value="Tubulin"/>
    <property type="match status" value="1"/>
</dbReference>
<dbReference type="PRINTS" id="PR00423">
    <property type="entry name" value="CELLDVISFTSZ"/>
</dbReference>
<dbReference type="SMART" id="SM00864">
    <property type="entry name" value="Tubulin"/>
    <property type="match status" value="1"/>
</dbReference>
<dbReference type="SMART" id="SM00865">
    <property type="entry name" value="Tubulin_C"/>
    <property type="match status" value="1"/>
</dbReference>
<dbReference type="SUPFAM" id="SSF55307">
    <property type="entry name" value="Tubulin C-terminal domain-like"/>
    <property type="match status" value="1"/>
</dbReference>
<dbReference type="SUPFAM" id="SSF52490">
    <property type="entry name" value="Tubulin nucleotide-binding domain-like"/>
    <property type="match status" value="1"/>
</dbReference>
<dbReference type="PROSITE" id="PS01134">
    <property type="entry name" value="FTSZ_1"/>
    <property type="match status" value="1"/>
</dbReference>
<dbReference type="PROSITE" id="PS01135">
    <property type="entry name" value="FTSZ_2"/>
    <property type="match status" value="1"/>
</dbReference>